<gene>
    <name type="ordered locus">Ent638_0568</name>
</gene>
<protein>
    <recommendedName>
        <fullName evidence="1">UPF0246 protein Ent638_0568</fullName>
    </recommendedName>
</protein>
<dbReference type="EMBL" id="CP000653">
    <property type="protein sequence ID" value="ABP59255.1"/>
    <property type="molecule type" value="Genomic_DNA"/>
</dbReference>
<dbReference type="RefSeq" id="WP_012015977.1">
    <property type="nucleotide sequence ID" value="NC_009436.1"/>
</dbReference>
<dbReference type="SMR" id="A4W6C5"/>
<dbReference type="STRING" id="399742.Ent638_0568"/>
<dbReference type="KEGG" id="ent:Ent638_0568"/>
<dbReference type="eggNOG" id="COG3022">
    <property type="taxonomic scope" value="Bacteria"/>
</dbReference>
<dbReference type="HOGENOM" id="CLU_061989_0_0_6"/>
<dbReference type="OrthoDB" id="9777133at2"/>
<dbReference type="Proteomes" id="UP000000230">
    <property type="component" value="Chromosome"/>
</dbReference>
<dbReference type="GO" id="GO:0005829">
    <property type="term" value="C:cytosol"/>
    <property type="evidence" value="ECO:0007669"/>
    <property type="project" value="TreeGrafter"/>
</dbReference>
<dbReference type="GO" id="GO:0033194">
    <property type="term" value="P:response to hydroperoxide"/>
    <property type="evidence" value="ECO:0007669"/>
    <property type="project" value="TreeGrafter"/>
</dbReference>
<dbReference type="HAMAP" id="MF_00652">
    <property type="entry name" value="UPF0246"/>
    <property type="match status" value="1"/>
</dbReference>
<dbReference type="InterPro" id="IPR005583">
    <property type="entry name" value="YaaA"/>
</dbReference>
<dbReference type="NCBIfam" id="NF002541">
    <property type="entry name" value="PRK02101.1-1"/>
    <property type="match status" value="1"/>
</dbReference>
<dbReference type="NCBIfam" id="NF002542">
    <property type="entry name" value="PRK02101.1-3"/>
    <property type="match status" value="1"/>
</dbReference>
<dbReference type="PANTHER" id="PTHR30283:SF4">
    <property type="entry name" value="PEROXIDE STRESS RESISTANCE PROTEIN YAAA"/>
    <property type="match status" value="1"/>
</dbReference>
<dbReference type="PANTHER" id="PTHR30283">
    <property type="entry name" value="PEROXIDE STRESS RESPONSE PROTEIN YAAA"/>
    <property type="match status" value="1"/>
</dbReference>
<dbReference type="Pfam" id="PF03883">
    <property type="entry name" value="H2O2_YaaD"/>
    <property type="match status" value="1"/>
</dbReference>
<sequence>MLILISPAKTLDYQSPLATERYTQPELLDHSQQLIREARKLSAPQIGKLMSISDKLADLNATRFHDWQPDFTPKNARQAILAFKGDVYTGLQAEEFSEADFDFAQQHLRMLSGLYGVLRPLDLMQPYRLEMGIRLENAKGKDLYQFWGDIITEKLNDALKAQGDNIVINLASDEYYRSVKPKKLNAEIIKPVFLDEKKGKFKVISFYAKKARGLMSRYIIENRLTKPEQLTAFNSEGYFFDGDASEKGELVFKRHEQ</sequence>
<reference key="1">
    <citation type="journal article" date="2010" name="PLoS Genet.">
        <title>Genome sequence of the plant growth promoting endophytic bacterium Enterobacter sp. 638.</title>
        <authorList>
            <person name="Taghavi S."/>
            <person name="van der Lelie D."/>
            <person name="Hoffman A."/>
            <person name="Zhang Y.B."/>
            <person name="Walla M.D."/>
            <person name="Vangronsveld J."/>
            <person name="Newman L."/>
            <person name="Monchy S."/>
        </authorList>
    </citation>
    <scope>NUCLEOTIDE SEQUENCE [LARGE SCALE GENOMIC DNA]</scope>
    <source>
        <strain>638</strain>
    </source>
</reference>
<accession>A4W6C5</accession>
<name>Y568_ENT38</name>
<comment type="similarity">
    <text evidence="1">Belongs to the UPF0246 family.</text>
</comment>
<organism>
    <name type="scientific">Enterobacter sp. (strain 638)</name>
    <dbReference type="NCBI Taxonomy" id="399742"/>
    <lineage>
        <taxon>Bacteria</taxon>
        <taxon>Pseudomonadati</taxon>
        <taxon>Pseudomonadota</taxon>
        <taxon>Gammaproteobacteria</taxon>
        <taxon>Enterobacterales</taxon>
        <taxon>Enterobacteriaceae</taxon>
        <taxon>Enterobacter</taxon>
    </lineage>
</organism>
<evidence type="ECO:0000255" key="1">
    <source>
        <dbReference type="HAMAP-Rule" id="MF_00652"/>
    </source>
</evidence>
<proteinExistence type="inferred from homology"/>
<feature type="chain" id="PRO_1000061600" description="UPF0246 protein Ent638_0568">
    <location>
        <begin position="1"/>
        <end position="257"/>
    </location>
</feature>